<accession>A9VG70</accession>
<feature type="chain" id="PRO_1000092847" description="Acetylglutamate kinase">
    <location>
        <begin position="1"/>
        <end position="255"/>
    </location>
</feature>
<feature type="binding site" evidence="1">
    <location>
        <begin position="40"/>
        <end position="41"/>
    </location>
    <ligand>
        <name>substrate</name>
    </ligand>
</feature>
<feature type="binding site" evidence="1">
    <location>
        <position position="62"/>
    </location>
    <ligand>
        <name>substrate</name>
    </ligand>
</feature>
<feature type="binding site" evidence="1">
    <location>
        <position position="153"/>
    </location>
    <ligand>
        <name>substrate</name>
    </ligand>
</feature>
<feature type="site" description="Transition state stabilizer" evidence="1">
    <location>
        <position position="8"/>
    </location>
</feature>
<feature type="site" description="Transition state stabilizer" evidence="1">
    <location>
        <position position="212"/>
    </location>
</feature>
<gene>
    <name evidence="1" type="primary">argB</name>
    <name type="ordered locus">BcerKBAB4_3963</name>
</gene>
<reference key="1">
    <citation type="journal article" date="2008" name="Chem. Biol. Interact.">
        <title>Extending the Bacillus cereus group genomics to putative food-borne pathogens of different toxicity.</title>
        <authorList>
            <person name="Lapidus A."/>
            <person name="Goltsman E."/>
            <person name="Auger S."/>
            <person name="Galleron N."/>
            <person name="Segurens B."/>
            <person name="Dossat C."/>
            <person name="Land M.L."/>
            <person name="Broussolle V."/>
            <person name="Brillard J."/>
            <person name="Guinebretiere M.-H."/>
            <person name="Sanchis V."/>
            <person name="Nguen-the C."/>
            <person name="Lereclus D."/>
            <person name="Richardson P."/>
            <person name="Wincker P."/>
            <person name="Weissenbach J."/>
            <person name="Ehrlich S.D."/>
            <person name="Sorokin A."/>
        </authorList>
    </citation>
    <scope>NUCLEOTIDE SEQUENCE [LARGE SCALE GENOMIC DNA]</scope>
    <source>
        <strain>KBAB4</strain>
    </source>
</reference>
<sequence length="255" mass="27444">MSDYIVVKCGGSMLDQLNDVFFDCIKKLQQKYKVVIVHGGGPEIDAKLKDCNIKVEKRDGLRVTPREVMDIVQMVLCGSTNKKLVMNLQKHNLLAVGCSGCDGNLLQVQPVSKEIGYVGEVSYVETALLKGLINMNYIPVIAPIGINENEIYNINADNAAAGIAAALSAKELIFITDVDGILHEGKLVKKTDEFEIDTFIEKGVITGGMIPKVQAALASLKMGVQKVSVVNGTKDFAEVTGECIGTTVTKGVNIV</sequence>
<name>ARGB_BACMK</name>
<dbReference type="EC" id="2.7.2.8" evidence="1"/>
<dbReference type="EMBL" id="CP000903">
    <property type="protein sequence ID" value="ABY45130.1"/>
    <property type="molecule type" value="Genomic_DNA"/>
</dbReference>
<dbReference type="RefSeq" id="WP_012261677.1">
    <property type="nucleotide sequence ID" value="NC_010184.1"/>
</dbReference>
<dbReference type="SMR" id="A9VG70"/>
<dbReference type="KEGG" id="bwe:BcerKBAB4_3963"/>
<dbReference type="eggNOG" id="COG0548">
    <property type="taxonomic scope" value="Bacteria"/>
</dbReference>
<dbReference type="HOGENOM" id="CLU_053680_1_0_9"/>
<dbReference type="UniPathway" id="UPA00068">
    <property type="reaction ID" value="UER00107"/>
</dbReference>
<dbReference type="Proteomes" id="UP000002154">
    <property type="component" value="Chromosome"/>
</dbReference>
<dbReference type="GO" id="GO:0005737">
    <property type="term" value="C:cytoplasm"/>
    <property type="evidence" value="ECO:0007669"/>
    <property type="project" value="UniProtKB-SubCell"/>
</dbReference>
<dbReference type="GO" id="GO:0003991">
    <property type="term" value="F:acetylglutamate kinase activity"/>
    <property type="evidence" value="ECO:0007669"/>
    <property type="project" value="UniProtKB-UniRule"/>
</dbReference>
<dbReference type="GO" id="GO:0005524">
    <property type="term" value="F:ATP binding"/>
    <property type="evidence" value="ECO:0007669"/>
    <property type="project" value="UniProtKB-UniRule"/>
</dbReference>
<dbReference type="GO" id="GO:0042450">
    <property type="term" value="P:arginine biosynthetic process via ornithine"/>
    <property type="evidence" value="ECO:0007669"/>
    <property type="project" value="UniProtKB-UniRule"/>
</dbReference>
<dbReference type="GO" id="GO:0006526">
    <property type="term" value="P:L-arginine biosynthetic process"/>
    <property type="evidence" value="ECO:0007669"/>
    <property type="project" value="UniProtKB-UniPathway"/>
</dbReference>
<dbReference type="CDD" id="cd04238">
    <property type="entry name" value="AAK_NAGK-like"/>
    <property type="match status" value="1"/>
</dbReference>
<dbReference type="FunFam" id="3.40.1160.10:FF:000034">
    <property type="entry name" value="Acetylglutamate kinase"/>
    <property type="match status" value="1"/>
</dbReference>
<dbReference type="Gene3D" id="3.40.1160.10">
    <property type="entry name" value="Acetylglutamate kinase-like"/>
    <property type="match status" value="1"/>
</dbReference>
<dbReference type="HAMAP" id="MF_00082">
    <property type="entry name" value="ArgB"/>
    <property type="match status" value="1"/>
</dbReference>
<dbReference type="InterPro" id="IPR036393">
    <property type="entry name" value="AceGlu_kinase-like_sf"/>
</dbReference>
<dbReference type="InterPro" id="IPR004662">
    <property type="entry name" value="AcgluKinase_fam"/>
</dbReference>
<dbReference type="InterPro" id="IPR037528">
    <property type="entry name" value="ArgB"/>
</dbReference>
<dbReference type="InterPro" id="IPR001048">
    <property type="entry name" value="Asp/Glu/Uridylate_kinase"/>
</dbReference>
<dbReference type="NCBIfam" id="TIGR00761">
    <property type="entry name" value="argB"/>
    <property type="match status" value="1"/>
</dbReference>
<dbReference type="PANTHER" id="PTHR23342">
    <property type="entry name" value="N-ACETYLGLUTAMATE SYNTHASE"/>
    <property type="match status" value="1"/>
</dbReference>
<dbReference type="PANTHER" id="PTHR23342:SF0">
    <property type="entry name" value="N-ACETYLGLUTAMATE SYNTHASE, MITOCHONDRIAL"/>
    <property type="match status" value="1"/>
</dbReference>
<dbReference type="Pfam" id="PF00696">
    <property type="entry name" value="AA_kinase"/>
    <property type="match status" value="1"/>
</dbReference>
<dbReference type="PIRSF" id="PIRSF000728">
    <property type="entry name" value="NAGK"/>
    <property type="match status" value="1"/>
</dbReference>
<dbReference type="SUPFAM" id="SSF53633">
    <property type="entry name" value="Carbamate kinase-like"/>
    <property type="match status" value="1"/>
</dbReference>
<comment type="function">
    <text evidence="1">Catalyzes the ATP-dependent phosphorylation of N-acetyl-L-glutamate.</text>
</comment>
<comment type="catalytic activity">
    <reaction evidence="1">
        <text>N-acetyl-L-glutamate + ATP = N-acetyl-L-glutamyl 5-phosphate + ADP</text>
        <dbReference type="Rhea" id="RHEA:14629"/>
        <dbReference type="ChEBI" id="CHEBI:30616"/>
        <dbReference type="ChEBI" id="CHEBI:44337"/>
        <dbReference type="ChEBI" id="CHEBI:57936"/>
        <dbReference type="ChEBI" id="CHEBI:456216"/>
        <dbReference type="EC" id="2.7.2.8"/>
    </reaction>
</comment>
<comment type="pathway">
    <text evidence="1">Amino-acid biosynthesis; L-arginine biosynthesis; N(2)-acetyl-L-ornithine from L-glutamate: step 2/4.</text>
</comment>
<comment type="subcellular location">
    <subcellularLocation>
        <location evidence="1">Cytoplasm</location>
    </subcellularLocation>
</comment>
<comment type="similarity">
    <text evidence="1">Belongs to the acetylglutamate kinase family. ArgB subfamily.</text>
</comment>
<protein>
    <recommendedName>
        <fullName evidence="1">Acetylglutamate kinase</fullName>
        <ecNumber evidence="1">2.7.2.8</ecNumber>
    </recommendedName>
    <alternativeName>
        <fullName evidence="1">N-acetyl-L-glutamate 5-phosphotransferase</fullName>
    </alternativeName>
    <alternativeName>
        <fullName evidence="1">NAG kinase</fullName>
        <shortName evidence="1">NAGK</shortName>
    </alternativeName>
</protein>
<proteinExistence type="inferred from homology"/>
<evidence type="ECO:0000255" key="1">
    <source>
        <dbReference type="HAMAP-Rule" id="MF_00082"/>
    </source>
</evidence>
<keyword id="KW-0028">Amino-acid biosynthesis</keyword>
<keyword id="KW-0055">Arginine biosynthesis</keyword>
<keyword id="KW-0067">ATP-binding</keyword>
<keyword id="KW-0963">Cytoplasm</keyword>
<keyword id="KW-0418">Kinase</keyword>
<keyword id="KW-0547">Nucleotide-binding</keyword>
<keyword id="KW-0808">Transferase</keyword>
<organism>
    <name type="scientific">Bacillus mycoides (strain KBAB4)</name>
    <name type="common">Bacillus weihenstephanensis</name>
    <dbReference type="NCBI Taxonomy" id="315730"/>
    <lineage>
        <taxon>Bacteria</taxon>
        <taxon>Bacillati</taxon>
        <taxon>Bacillota</taxon>
        <taxon>Bacilli</taxon>
        <taxon>Bacillales</taxon>
        <taxon>Bacillaceae</taxon>
        <taxon>Bacillus</taxon>
        <taxon>Bacillus cereus group</taxon>
    </lineage>
</organism>